<feature type="chain" id="PRO_1000184701" description="ATP synthase subunit delta">
    <location>
        <begin position="1"/>
        <end position="177"/>
    </location>
</feature>
<gene>
    <name evidence="1" type="primary">atpH</name>
    <name type="ordered locus">ECIAI1_3919</name>
</gene>
<protein>
    <recommendedName>
        <fullName evidence="1">ATP synthase subunit delta</fullName>
    </recommendedName>
    <alternativeName>
        <fullName evidence="1">ATP synthase F(1) sector subunit delta</fullName>
    </alternativeName>
    <alternativeName>
        <fullName evidence="1">F-type ATPase subunit delta</fullName>
        <shortName evidence="1">F-ATPase subunit delta</shortName>
    </alternativeName>
</protein>
<name>ATPD_ECO8A</name>
<reference key="1">
    <citation type="journal article" date="2009" name="PLoS Genet.">
        <title>Organised genome dynamics in the Escherichia coli species results in highly diverse adaptive paths.</title>
        <authorList>
            <person name="Touchon M."/>
            <person name="Hoede C."/>
            <person name="Tenaillon O."/>
            <person name="Barbe V."/>
            <person name="Baeriswyl S."/>
            <person name="Bidet P."/>
            <person name="Bingen E."/>
            <person name="Bonacorsi S."/>
            <person name="Bouchier C."/>
            <person name="Bouvet O."/>
            <person name="Calteau A."/>
            <person name="Chiapello H."/>
            <person name="Clermont O."/>
            <person name="Cruveiller S."/>
            <person name="Danchin A."/>
            <person name="Diard M."/>
            <person name="Dossat C."/>
            <person name="Karoui M.E."/>
            <person name="Frapy E."/>
            <person name="Garry L."/>
            <person name="Ghigo J.M."/>
            <person name="Gilles A.M."/>
            <person name="Johnson J."/>
            <person name="Le Bouguenec C."/>
            <person name="Lescat M."/>
            <person name="Mangenot S."/>
            <person name="Martinez-Jehanne V."/>
            <person name="Matic I."/>
            <person name="Nassif X."/>
            <person name="Oztas S."/>
            <person name="Petit M.A."/>
            <person name="Pichon C."/>
            <person name="Rouy Z."/>
            <person name="Ruf C.S."/>
            <person name="Schneider D."/>
            <person name="Tourret J."/>
            <person name="Vacherie B."/>
            <person name="Vallenet D."/>
            <person name="Medigue C."/>
            <person name="Rocha E.P.C."/>
            <person name="Denamur E."/>
        </authorList>
    </citation>
    <scope>NUCLEOTIDE SEQUENCE [LARGE SCALE GENOMIC DNA]</scope>
    <source>
        <strain>IAI1</strain>
    </source>
</reference>
<proteinExistence type="inferred from homology"/>
<comment type="function">
    <text evidence="1">F(1)F(0) ATP synthase produces ATP from ADP in the presence of a proton or sodium gradient. F-type ATPases consist of two structural domains, F(1) containing the extramembraneous catalytic core and F(0) containing the membrane proton channel, linked together by a central stalk and a peripheral stalk. During catalysis, ATP synthesis in the catalytic domain of F(1) is coupled via a rotary mechanism of the central stalk subunits to proton translocation.</text>
</comment>
<comment type="function">
    <text evidence="1">This protein is part of the stalk that links CF(0) to CF(1). It either transmits conformational changes from CF(0) to CF(1) or is implicated in proton conduction.</text>
</comment>
<comment type="subunit">
    <text evidence="1">F-type ATPases have 2 components, F(1) - the catalytic core - and F(0) - the membrane proton channel. F(1) has five subunits: alpha(3), beta(3), gamma(1), delta(1), epsilon(1). F(0) has three main subunits: a(1), b(2) and c(10-14). The alpha and beta chains form an alternating ring which encloses part of the gamma chain. F(1) is attached to F(0) by a central stalk formed by the gamma and epsilon chains, while a peripheral stalk is formed by the delta and b chains.</text>
</comment>
<comment type="subcellular location">
    <subcellularLocation>
        <location evidence="1">Cell inner membrane</location>
        <topology evidence="1">Peripheral membrane protein</topology>
    </subcellularLocation>
</comment>
<comment type="similarity">
    <text evidence="1">Belongs to the ATPase delta chain family.</text>
</comment>
<evidence type="ECO:0000255" key="1">
    <source>
        <dbReference type="HAMAP-Rule" id="MF_01416"/>
    </source>
</evidence>
<keyword id="KW-0066">ATP synthesis</keyword>
<keyword id="KW-0997">Cell inner membrane</keyword>
<keyword id="KW-1003">Cell membrane</keyword>
<keyword id="KW-0139">CF(1)</keyword>
<keyword id="KW-0375">Hydrogen ion transport</keyword>
<keyword id="KW-0406">Ion transport</keyword>
<keyword id="KW-0472">Membrane</keyword>
<keyword id="KW-0813">Transport</keyword>
<dbReference type="EMBL" id="CU928160">
    <property type="protein sequence ID" value="CAR00713.1"/>
    <property type="molecule type" value="Genomic_DNA"/>
</dbReference>
<dbReference type="RefSeq" id="WP_001288587.1">
    <property type="nucleotide sequence ID" value="NC_011741.1"/>
</dbReference>
<dbReference type="SMR" id="B7M591"/>
<dbReference type="GeneID" id="93778232"/>
<dbReference type="KEGG" id="ecr:ECIAI1_3919"/>
<dbReference type="HOGENOM" id="CLU_085114_3_0_6"/>
<dbReference type="GO" id="GO:0005886">
    <property type="term" value="C:plasma membrane"/>
    <property type="evidence" value="ECO:0007669"/>
    <property type="project" value="UniProtKB-SubCell"/>
</dbReference>
<dbReference type="GO" id="GO:0045259">
    <property type="term" value="C:proton-transporting ATP synthase complex"/>
    <property type="evidence" value="ECO:0007669"/>
    <property type="project" value="UniProtKB-KW"/>
</dbReference>
<dbReference type="GO" id="GO:0046933">
    <property type="term" value="F:proton-transporting ATP synthase activity, rotational mechanism"/>
    <property type="evidence" value="ECO:0007669"/>
    <property type="project" value="UniProtKB-UniRule"/>
</dbReference>
<dbReference type="FunFam" id="1.10.520.20:FF:000001">
    <property type="entry name" value="ATP synthase subunit delta"/>
    <property type="match status" value="1"/>
</dbReference>
<dbReference type="Gene3D" id="1.10.520.20">
    <property type="entry name" value="N-terminal domain of the delta subunit of the F1F0-ATP synthase"/>
    <property type="match status" value="1"/>
</dbReference>
<dbReference type="HAMAP" id="MF_01416">
    <property type="entry name" value="ATP_synth_delta_bact"/>
    <property type="match status" value="1"/>
</dbReference>
<dbReference type="InterPro" id="IPR026015">
    <property type="entry name" value="ATP_synth_OSCP/delta_N_sf"/>
</dbReference>
<dbReference type="InterPro" id="IPR020781">
    <property type="entry name" value="ATPase_OSCP/d_CS"/>
</dbReference>
<dbReference type="InterPro" id="IPR000711">
    <property type="entry name" value="ATPase_OSCP/dsu"/>
</dbReference>
<dbReference type="NCBIfam" id="TIGR01145">
    <property type="entry name" value="ATP_synt_delta"/>
    <property type="match status" value="1"/>
</dbReference>
<dbReference type="NCBIfam" id="NF004402">
    <property type="entry name" value="PRK05758.2-2"/>
    <property type="match status" value="1"/>
</dbReference>
<dbReference type="NCBIfam" id="NF004404">
    <property type="entry name" value="PRK05758.2-5"/>
    <property type="match status" value="1"/>
</dbReference>
<dbReference type="PANTHER" id="PTHR11910">
    <property type="entry name" value="ATP SYNTHASE DELTA CHAIN"/>
    <property type="match status" value="1"/>
</dbReference>
<dbReference type="Pfam" id="PF00213">
    <property type="entry name" value="OSCP"/>
    <property type="match status" value="1"/>
</dbReference>
<dbReference type="PRINTS" id="PR00125">
    <property type="entry name" value="ATPASEDELTA"/>
</dbReference>
<dbReference type="SUPFAM" id="SSF47928">
    <property type="entry name" value="N-terminal domain of the delta subunit of the F1F0-ATP synthase"/>
    <property type="match status" value="1"/>
</dbReference>
<dbReference type="PROSITE" id="PS00389">
    <property type="entry name" value="ATPASE_DELTA"/>
    <property type="match status" value="1"/>
</dbReference>
<sequence>MSEFITVARPYAKAAFDFAVEHQSVERWQDMLAFAAEVTKNEQMAELLSGALAPETLAESFIAVCGEQLDENGQNLIRVMAENGRLNALPDVLEQFIHLRAVSEATAEVDVISAAALSEQQLAKISAAMEKRLSRKVKLNCKIDKSVMAGVIIRAGDMVIDGSVRGRLERLADVLQS</sequence>
<organism>
    <name type="scientific">Escherichia coli O8 (strain IAI1)</name>
    <dbReference type="NCBI Taxonomy" id="585034"/>
    <lineage>
        <taxon>Bacteria</taxon>
        <taxon>Pseudomonadati</taxon>
        <taxon>Pseudomonadota</taxon>
        <taxon>Gammaproteobacteria</taxon>
        <taxon>Enterobacterales</taxon>
        <taxon>Enterobacteriaceae</taxon>
        <taxon>Escherichia</taxon>
    </lineage>
</organism>
<accession>B7M591</accession>